<reference key="1">
    <citation type="journal article" date="1997" name="Nature">
        <title>The complete genome sequence of the gastric pathogen Helicobacter pylori.</title>
        <authorList>
            <person name="Tomb J.-F."/>
            <person name="White O."/>
            <person name="Kerlavage A.R."/>
            <person name="Clayton R.A."/>
            <person name="Sutton G.G."/>
            <person name="Fleischmann R.D."/>
            <person name="Ketchum K.A."/>
            <person name="Klenk H.-P."/>
            <person name="Gill S.R."/>
            <person name="Dougherty B.A."/>
            <person name="Nelson K.E."/>
            <person name="Quackenbush J."/>
            <person name="Zhou L."/>
            <person name="Kirkness E.F."/>
            <person name="Peterson S.N."/>
            <person name="Loftus B.J."/>
            <person name="Richardson D.L."/>
            <person name="Dodson R.J."/>
            <person name="Khalak H.G."/>
            <person name="Glodek A."/>
            <person name="McKenney K."/>
            <person name="FitzGerald L.M."/>
            <person name="Lee N."/>
            <person name="Adams M.D."/>
            <person name="Hickey E.K."/>
            <person name="Berg D.E."/>
            <person name="Gocayne J.D."/>
            <person name="Utterback T.R."/>
            <person name="Peterson J.D."/>
            <person name="Kelley J.M."/>
            <person name="Cotton M.D."/>
            <person name="Weidman J.F."/>
            <person name="Fujii C."/>
            <person name="Bowman C."/>
            <person name="Watthey L."/>
            <person name="Wallin E."/>
            <person name="Hayes W.S."/>
            <person name="Borodovsky M."/>
            <person name="Karp P.D."/>
            <person name="Smith H.O."/>
            <person name="Fraser C.M."/>
            <person name="Venter J.C."/>
        </authorList>
    </citation>
    <scope>NUCLEOTIDE SEQUENCE [LARGE SCALE GENOMIC DNA]</scope>
    <source>
        <strain>ATCC 700392 / 26695</strain>
    </source>
</reference>
<protein>
    <recommendedName>
        <fullName>Biopolymer transport protein ExbD</fullName>
    </recommendedName>
</protein>
<keyword id="KW-0997">Cell inner membrane</keyword>
<keyword id="KW-1003">Cell membrane</keyword>
<keyword id="KW-0472">Membrane</keyword>
<keyword id="KW-0653">Protein transport</keyword>
<keyword id="KW-1185">Reference proteome</keyword>
<keyword id="KW-0812">Transmembrane</keyword>
<keyword id="KW-1133">Transmembrane helix</keyword>
<keyword id="KW-0813">Transport</keyword>
<feature type="chain" id="PRO_0000129122" description="Biopolymer transport protein ExbD">
    <location>
        <begin position="1"/>
        <end position="129"/>
    </location>
</feature>
<feature type="topological domain" description="Cytoplasmic" evidence="2">
    <location>
        <begin position="1"/>
        <end position="12"/>
    </location>
</feature>
<feature type="transmembrane region" description="Helical" evidence="2">
    <location>
        <begin position="13"/>
        <end position="33"/>
    </location>
</feature>
<feature type="topological domain" description="Periplasmic" evidence="2">
    <location>
        <begin position="34"/>
        <end position="129"/>
    </location>
</feature>
<evidence type="ECO:0000250" key="1"/>
<evidence type="ECO:0000255" key="2"/>
<evidence type="ECO:0000305" key="3"/>
<name>EXBD_HELPY</name>
<accession>O25898</accession>
<dbReference type="EMBL" id="AE000511">
    <property type="protein sequence ID" value="AAD08382.1"/>
    <property type="molecule type" value="Genomic_DNA"/>
</dbReference>
<dbReference type="PIR" id="D64687">
    <property type="entry name" value="D64687"/>
</dbReference>
<dbReference type="RefSeq" id="NP_208132.1">
    <property type="nucleotide sequence ID" value="NC_000915.1"/>
</dbReference>
<dbReference type="RefSeq" id="WP_000836350.1">
    <property type="nucleotide sequence ID" value="NC_018939.1"/>
</dbReference>
<dbReference type="SMR" id="O25898"/>
<dbReference type="DIP" id="DIP-3143N"/>
<dbReference type="IntAct" id="O25898">
    <property type="interactions" value="1"/>
</dbReference>
<dbReference type="MINT" id="O25898"/>
<dbReference type="STRING" id="85962.HP_1340"/>
<dbReference type="PaxDb" id="85962-C694_06915"/>
<dbReference type="EnsemblBacteria" id="AAD08382">
    <property type="protein sequence ID" value="AAD08382"/>
    <property type="gene ID" value="HP_1340"/>
</dbReference>
<dbReference type="KEGG" id="heo:C694_06915"/>
<dbReference type="KEGG" id="hpy:HP_1340"/>
<dbReference type="PATRIC" id="fig|85962.47.peg.1435"/>
<dbReference type="eggNOG" id="COG0848">
    <property type="taxonomic scope" value="Bacteria"/>
</dbReference>
<dbReference type="InParanoid" id="O25898"/>
<dbReference type="OrthoDB" id="9798629at2"/>
<dbReference type="PhylomeDB" id="O25898"/>
<dbReference type="Proteomes" id="UP000000429">
    <property type="component" value="Chromosome"/>
</dbReference>
<dbReference type="GO" id="GO:0005886">
    <property type="term" value="C:plasma membrane"/>
    <property type="evidence" value="ECO:0000318"/>
    <property type="project" value="GO_Central"/>
</dbReference>
<dbReference type="GO" id="GO:0022857">
    <property type="term" value="F:transmembrane transporter activity"/>
    <property type="evidence" value="ECO:0007669"/>
    <property type="project" value="InterPro"/>
</dbReference>
<dbReference type="GO" id="GO:0015031">
    <property type="term" value="P:protein transport"/>
    <property type="evidence" value="ECO:0007669"/>
    <property type="project" value="UniProtKB-KW"/>
</dbReference>
<dbReference type="Gene3D" id="3.30.420.270">
    <property type="match status" value="1"/>
</dbReference>
<dbReference type="InterPro" id="IPR003400">
    <property type="entry name" value="ExbD"/>
</dbReference>
<dbReference type="InterPro" id="IPR014171">
    <property type="entry name" value="TonB_ExbD_2"/>
</dbReference>
<dbReference type="NCBIfam" id="TIGR02804">
    <property type="entry name" value="ExbD_2"/>
    <property type="match status" value="1"/>
</dbReference>
<dbReference type="PANTHER" id="PTHR30558:SF12">
    <property type="entry name" value="BIOPOLYMER TRANSPORT PROTEIN EXBD"/>
    <property type="match status" value="1"/>
</dbReference>
<dbReference type="PANTHER" id="PTHR30558">
    <property type="entry name" value="EXBD MEMBRANE COMPONENT OF PMF-DRIVEN MACROMOLECULE IMPORT SYSTEM"/>
    <property type="match status" value="1"/>
</dbReference>
<dbReference type="Pfam" id="PF02472">
    <property type="entry name" value="ExbD"/>
    <property type="match status" value="1"/>
</dbReference>
<proteinExistence type="inferred from homology"/>
<sequence length="129" mass="14377">MKSIRRGDGLNVVPFIDIMLVLLAIVLSISTFIAQGKIKVSLPNAKNAEKSQPNDQKVVVISVDEHDNIFVDDKPMNLEALSAVVKQTDPKTLIDLKSDKSSRFETFISIMDILKEHNHENFSISTQAQ</sequence>
<comment type="function">
    <text evidence="1">Involved in the TonB-dependent energy-dependent transport of various receptor-bound substrates.</text>
</comment>
<comment type="subunit">
    <text evidence="1">The accessory proteins ExbB and ExbD seem to form a complex with TonB.</text>
</comment>
<comment type="subcellular location">
    <subcellularLocation>
        <location evidence="3">Cell inner membrane</location>
        <topology evidence="3">Single-pass type II membrane protein</topology>
    </subcellularLocation>
</comment>
<comment type="similarity">
    <text evidence="3">Belongs to the ExbD/TolR family.</text>
</comment>
<gene>
    <name type="primary">exbD</name>
    <name type="ordered locus">HP_1340</name>
</gene>
<organism>
    <name type="scientific">Helicobacter pylori (strain ATCC 700392 / 26695)</name>
    <name type="common">Campylobacter pylori</name>
    <dbReference type="NCBI Taxonomy" id="85962"/>
    <lineage>
        <taxon>Bacteria</taxon>
        <taxon>Pseudomonadati</taxon>
        <taxon>Campylobacterota</taxon>
        <taxon>Epsilonproteobacteria</taxon>
        <taxon>Campylobacterales</taxon>
        <taxon>Helicobacteraceae</taxon>
        <taxon>Helicobacter</taxon>
    </lineage>
</organism>